<dbReference type="EC" id="2.7.1.33" evidence="1"/>
<dbReference type="EMBL" id="CP000407">
    <property type="protein sequence ID" value="ABP90054.1"/>
    <property type="molecule type" value="Genomic_DNA"/>
</dbReference>
<dbReference type="SMR" id="A4VVB5"/>
<dbReference type="STRING" id="391295.SSU05_1088"/>
<dbReference type="KEGG" id="ssu:SSU05_1088"/>
<dbReference type="eggNOG" id="COG1072">
    <property type="taxonomic scope" value="Bacteria"/>
</dbReference>
<dbReference type="HOGENOM" id="CLU_053818_1_1_9"/>
<dbReference type="UniPathway" id="UPA00241">
    <property type="reaction ID" value="UER00352"/>
</dbReference>
<dbReference type="GO" id="GO:0005737">
    <property type="term" value="C:cytoplasm"/>
    <property type="evidence" value="ECO:0007669"/>
    <property type="project" value="UniProtKB-SubCell"/>
</dbReference>
<dbReference type="GO" id="GO:0005524">
    <property type="term" value="F:ATP binding"/>
    <property type="evidence" value="ECO:0007669"/>
    <property type="project" value="UniProtKB-UniRule"/>
</dbReference>
<dbReference type="GO" id="GO:0004594">
    <property type="term" value="F:pantothenate kinase activity"/>
    <property type="evidence" value="ECO:0007669"/>
    <property type="project" value="UniProtKB-UniRule"/>
</dbReference>
<dbReference type="GO" id="GO:0015937">
    <property type="term" value="P:coenzyme A biosynthetic process"/>
    <property type="evidence" value="ECO:0007669"/>
    <property type="project" value="UniProtKB-UniRule"/>
</dbReference>
<dbReference type="CDD" id="cd02025">
    <property type="entry name" value="PanK"/>
    <property type="match status" value="1"/>
</dbReference>
<dbReference type="Gene3D" id="3.40.50.300">
    <property type="entry name" value="P-loop containing nucleotide triphosphate hydrolases"/>
    <property type="match status" value="1"/>
</dbReference>
<dbReference type="HAMAP" id="MF_00215">
    <property type="entry name" value="Pantothen_kinase_1"/>
    <property type="match status" value="1"/>
</dbReference>
<dbReference type="InterPro" id="IPR027417">
    <property type="entry name" value="P-loop_NTPase"/>
</dbReference>
<dbReference type="InterPro" id="IPR004566">
    <property type="entry name" value="PanK"/>
</dbReference>
<dbReference type="InterPro" id="IPR006083">
    <property type="entry name" value="PRK/URK"/>
</dbReference>
<dbReference type="NCBIfam" id="TIGR00554">
    <property type="entry name" value="panK_bact"/>
    <property type="match status" value="1"/>
</dbReference>
<dbReference type="PANTHER" id="PTHR10285">
    <property type="entry name" value="URIDINE KINASE"/>
    <property type="match status" value="1"/>
</dbReference>
<dbReference type="Pfam" id="PF00485">
    <property type="entry name" value="PRK"/>
    <property type="match status" value="1"/>
</dbReference>
<dbReference type="PIRSF" id="PIRSF000545">
    <property type="entry name" value="Pantothenate_kin"/>
    <property type="match status" value="1"/>
</dbReference>
<dbReference type="SUPFAM" id="SSF52540">
    <property type="entry name" value="P-loop containing nucleoside triphosphate hydrolases"/>
    <property type="match status" value="1"/>
</dbReference>
<accession>A4VVB5</accession>
<reference key="1">
    <citation type="journal article" date="2007" name="PLoS ONE">
        <title>A glimpse of streptococcal toxic shock syndrome from comparative genomics of S. suis 2 Chinese isolates.</title>
        <authorList>
            <person name="Chen C."/>
            <person name="Tang J."/>
            <person name="Dong W."/>
            <person name="Wang C."/>
            <person name="Feng Y."/>
            <person name="Wang J."/>
            <person name="Zheng F."/>
            <person name="Pan X."/>
            <person name="Liu D."/>
            <person name="Li M."/>
            <person name="Song Y."/>
            <person name="Zhu X."/>
            <person name="Sun H."/>
            <person name="Feng T."/>
            <person name="Guo Z."/>
            <person name="Ju A."/>
            <person name="Ge J."/>
            <person name="Dong Y."/>
            <person name="Sun W."/>
            <person name="Jiang Y."/>
            <person name="Wang J."/>
            <person name="Yan J."/>
            <person name="Yang H."/>
            <person name="Wang X."/>
            <person name="Gao G.F."/>
            <person name="Yang R."/>
            <person name="Wang J."/>
            <person name="Yu J."/>
        </authorList>
    </citation>
    <scope>NUCLEOTIDE SEQUENCE [LARGE SCALE GENOMIC DNA]</scope>
    <source>
        <strain>05ZYH33</strain>
    </source>
</reference>
<proteinExistence type="inferred from homology"/>
<gene>
    <name evidence="1" type="primary">coaA</name>
    <name type="ordered locus">SSU05_1088</name>
</gene>
<feature type="chain" id="PRO_1000043270" description="Pantothenate kinase">
    <location>
        <begin position="1"/>
        <end position="306"/>
    </location>
</feature>
<feature type="binding site" evidence="1">
    <location>
        <begin position="91"/>
        <end position="98"/>
    </location>
    <ligand>
        <name>ATP</name>
        <dbReference type="ChEBI" id="CHEBI:30616"/>
    </ligand>
</feature>
<name>COAA_STRSY</name>
<comment type="catalytic activity">
    <reaction evidence="1">
        <text>(R)-pantothenate + ATP = (R)-4'-phosphopantothenate + ADP + H(+)</text>
        <dbReference type="Rhea" id="RHEA:16373"/>
        <dbReference type="ChEBI" id="CHEBI:10986"/>
        <dbReference type="ChEBI" id="CHEBI:15378"/>
        <dbReference type="ChEBI" id="CHEBI:29032"/>
        <dbReference type="ChEBI" id="CHEBI:30616"/>
        <dbReference type="ChEBI" id="CHEBI:456216"/>
        <dbReference type="EC" id="2.7.1.33"/>
    </reaction>
</comment>
<comment type="pathway">
    <text evidence="1">Cofactor biosynthesis; coenzyme A biosynthesis; CoA from (R)-pantothenate: step 1/5.</text>
</comment>
<comment type="subcellular location">
    <subcellularLocation>
        <location evidence="1">Cytoplasm</location>
    </subcellularLocation>
</comment>
<comment type="similarity">
    <text evidence="1">Belongs to the prokaryotic pantothenate kinase family.</text>
</comment>
<evidence type="ECO:0000255" key="1">
    <source>
        <dbReference type="HAMAP-Rule" id="MF_00215"/>
    </source>
</evidence>
<protein>
    <recommendedName>
        <fullName evidence="1">Pantothenate kinase</fullName>
        <ecNumber evidence="1">2.7.1.33</ecNumber>
    </recommendedName>
    <alternativeName>
        <fullName evidence="1">Pantothenic acid kinase</fullName>
    </alternativeName>
</protein>
<organism>
    <name type="scientific">Streptococcus suis (strain 05ZYH33)</name>
    <dbReference type="NCBI Taxonomy" id="391295"/>
    <lineage>
        <taxon>Bacteria</taxon>
        <taxon>Bacillati</taxon>
        <taxon>Bacillota</taxon>
        <taxon>Bacilli</taxon>
        <taxon>Lactobacillales</taxon>
        <taxon>Streptococcaceae</taxon>
        <taxon>Streptococcus</taxon>
    </lineage>
</organism>
<sequence length="306" mass="36063">MKNEFLNFEQIDRATWQQLHRKTTIPLSQSELNSIKSFNDRIQLHEVSDIYLPLVNLIHIYRKARKDLNFTKSLFLQKTIKPQPFIIGVSGSVAVGKSTTSRLLQILIARTFKYAKVELVTTDGFLQPNAVLEERQLLNKKGFPESYDMEKLIDFLDKIKNGYDCQIPVYSHEIYDIIPNKTQEIKSPDFLIVEGINVFQNPQNQRLYVSDYFDLSIYVDADVEHIETWYLERFQKLLTLAKNDPNNYYHRFTQMTYPEILSIAQNTWKNINLANLEKFIEPTRNRADIILHKAENHEIDKIYLKK</sequence>
<keyword id="KW-0067">ATP-binding</keyword>
<keyword id="KW-0173">Coenzyme A biosynthesis</keyword>
<keyword id="KW-0963">Cytoplasm</keyword>
<keyword id="KW-0418">Kinase</keyword>
<keyword id="KW-0547">Nucleotide-binding</keyword>
<keyword id="KW-0808">Transferase</keyword>